<comment type="function">
    <text evidence="1">Part of the ABC transporter complex PstSACB involved in phosphate import. Responsible for energy coupling to the transport system.</text>
</comment>
<comment type="catalytic activity">
    <reaction evidence="1">
        <text>phosphate(out) + ATP + H2O = ADP + 2 phosphate(in) + H(+)</text>
        <dbReference type="Rhea" id="RHEA:24440"/>
        <dbReference type="ChEBI" id="CHEBI:15377"/>
        <dbReference type="ChEBI" id="CHEBI:15378"/>
        <dbReference type="ChEBI" id="CHEBI:30616"/>
        <dbReference type="ChEBI" id="CHEBI:43474"/>
        <dbReference type="ChEBI" id="CHEBI:456216"/>
        <dbReference type="EC" id="7.3.2.1"/>
    </reaction>
</comment>
<comment type="subunit">
    <text evidence="1">The complex is composed of two ATP-binding proteins (PstB), two transmembrane proteins (PstC and PstA) and a solute-binding protein (PstS).</text>
</comment>
<comment type="subcellular location">
    <subcellularLocation>
        <location evidence="1">Cell inner membrane</location>
        <topology evidence="1">Peripheral membrane protein</topology>
    </subcellularLocation>
</comment>
<comment type="similarity">
    <text evidence="1">Belongs to the ABC transporter superfamily. Phosphate importer (TC 3.A.1.7) family.</text>
</comment>
<evidence type="ECO:0000255" key="1">
    <source>
        <dbReference type="HAMAP-Rule" id="MF_01702"/>
    </source>
</evidence>
<evidence type="ECO:0000256" key="2">
    <source>
        <dbReference type="SAM" id="MobiDB-lite"/>
    </source>
</evidence>
<gene>
    <name evidence="1" type="primary">pstB</name>
    <name type="ordered locus">RPD_0891</name>
</gene>
<reference key="1">
    <citation type="submission" date="2006-03" db="EMBL/GenBank/DDBJ databases">
        <title>Complete sequence of Rhodopseudomonas palustris BisB5.</title>
        <authorList>
            <consortium name="US DOE Joint Genome Institute"/>
            <person name="Copeland A."/>
            <person name="Lucas S."/>
            <person name="Lapidus A."/>
            <person name="Barry K."/>
            <person name="Detter J.C."/>
            <person name="Glavina del Rio T."/>
            <person name="Hammon N."/>
            <person name="Israni S."/>
            <person name="Dalin E."/>
            <person name="Tice H."/>
            <person name="Pitluck S."/>
            <person name="Chain P."/>
            <person name="Malfatti S."/>
            <person name="Shin M."/>
            <person name="Vergez L."/>
            <person name="Schmutz J."/>
            <person name="Larimer F."/>
            <person name="Land M."/>
            <person name="Hauser L."/>
            <person name="Pelletier D.A."/>
            <person name="Kyrpides N."/>
            <person name="Lykidis A."/>
            <person name="Oda Y."/>
            <person name="Harwood C.S."/>
            <person name="Richardson P."/>
        </authorList>
    </citation>
    <scope>NUCLEOTIDE SEQUENCE [LARGE SCALE GENOMIC DNA]</scope>
    <source>
        <strain>BisB5</strain>
    </source>
</reference>
<feature type="chain" id="PRO_0000272514" description="Phosphate import ATP-binding protein PstB">
    <location>
        <begin position="1"/>
        <end position="274"/>
    </location>
</feature>
<feature type="domain" description="ABC transporter" evidence="1">
    <location>
        <begin position="28"/>
        <end position="269"/>
    </location>
</feature>
<feature type="region of interest" description="Disordered" evidence="2">
    <location>
        <begin position="1"/>
        <end position="21"/>
    </location>
</feature>
<feature type="compositionally biased region" description="Polar residues" evidence="2">
    <location>
        <begin position="1"/>
        <end position="11"/>
    </location>
</feature>
<feature type="binding site" evidence="1">
    <location>
        <begin position="60"/>
        <end position="67"/>
    </location>
    <ligand>
        <name>ATP</name>
        <dbReference type="ChEBI" id="CHEBI:30616"/>
    </ligand>
</feature>
<accession>Q13CR0</accession>
<dbReference type="EC" id="7.3.2.1" evidence="1"/>
<dbReference type="EMBL" id="CP000283">
    <property type="protein sequence ID" value="ABE38129.1"/>
    <property type="molecule type" value="Genomic_DNA"/>
</dbReference>
<dbReference type="SMR" id="Q13CR0"/>
<dbReference type="STRING" id="316057.RPD_0891"/>
<dbReference type="KEGG" id="rpd:RPD_0891"/>
<dbReference type="eggNOG" id="COG1117">
    <property type="taxonomic scope" value="Bacteria"/>
</dbReference>
<dbReference type="HOGENOM" id="CLU_000604_1_22_5"/>
<dbReference type="BioCyc" id="RPAL316057:RPD_RS04530-MONOMER"/>
<dbReference type="Proteomes" id="UP000001818">
    <property type="component" value="Chromosome"/>
</dbReference>
<dbReference type="GO" id="GO:0005886">
    <property type="term" value="C:plasma membrane"/>
    <property type="evidence" value="ECO:0007669"/>
    <property type="project" value="UniProtKB-SubCell"/>
</dbReference>
<dbReference type="GO" id="GO:0005524">
    <property type="term" value="F:ATP binding"/>
    <property type="evidence" value="ECO:0007669"/>
    <property type="project" value="UniProtKB-KW"/>
</dbReference>
<dbReference type="GO" id="GO:0016887">
    <property type="term" value="F:ATP hydrolysis activity"/>
    <property type="evidence" value="ECO:0007669"/>
    <property type="project" value="InterPro"/>
</dbReference>
<dbReference type="GO" id="GO:0015415">
    <property type="term" value="F:ATPase-coupled phosphate ion transmembrane transporter activity"/>
    <property type="evidence" value="ECO:0007669"/>
    <property type="project" value="UniProtKB-EC"/>
</dbReference>
<dbReference type="GO" id="GO:0035435">
    <property type="term" value="P:phosphate ion transmembrane transport"/>
    <property type="evidence" value="ECO:0007669"/>
    <property type="project" value="InterPro"/>
</dbReference>
<dbReference type="CDD" id="cd03260">
    <property type="entry name" value="ABC_PstB_phosphate_transporter"/>
    <property type="match status" value="1"/>
</dbReference>
<dbReference type="FunFam" id="3.40.50.300:FF:000132">
    <property type="entry name" value="Phosphate import ATP-binding protein PstB"/>
    <property type="match status" value="1"/>
</dbReference>
<dbReference type="Gene3D" id="3.40.50.300">
    <property type="entry name" value="P-loop containing nucleotide triphosphate hydrolases"/>
    <property type="match status" value="1"/>
</dbReference>
<dbReference type="InterPro" id="IPR003593">
    <property type="entry name" value="AAA+_ATPase"/>
</dbReference>
<dbReference type="InterPro" id="IPR003439">
    <property type="entry name" value="ABC_transporter-like_ATP-bd"/>
</dbReference>
<dbReference type="InterPro" id="IPR017871">
    <property type="entry name" value="ABC_transporter-like_CS"/>
</dbReference>
<dbReference type="InterPro" id="IPR027417">
    <property type="entry name" value="P-loop_NTPase"/>
</dbReference>
<dbReference type="InterPro" id="IPR005670">
    <property type="entry name" value="PstB-like"/>
</dbReference>
<dbReference type="NCBIfam" id="TIGR00972">
    <property type="entry name" value="3a0107s01c2"/>
    <property type="match status" value="1"/>
</dbReference>
<dbReference type="PANTHER" id="PTHR43423">
    <property type="entry name" value="ABC TRANSPORTER I FAMILY MEMBER 17"/>
    <property type="match status" value="1"/>
</dbReference>
<dbReference type="PANTHER" id="PTHR43423:SF3">
    <property type="entry name" value="PHOSPHATE IMPORT ATP-BINDING PROTEIN PSTB"/>
    <property type="match status" value="1"/>
</dbReference>
<dbReference type="Pfam" id="PF00005">
    <property type="entry name" value="ABC_tran"/>
    <property type="match status" value="1"/>
</dbReference>
<dbReference type="SMART" id="SM00382">
    <property type="entry name" value="AAA"/>
    <property type="match status" value="1"/>
</dbReference>
<dbReference type="SUPFAM" id="SSF52540">
    <property type="entry name" value="P-loop containing nucleoside triphosphate hydrolases"/>
    <property type="match status" value="1"/>
</dbReference>
<dbReference type="PROSITE" id="PS00211">
    <property type="entry name" value="ABC_TRANSPORTER_1"/>
    <property type="match status" value="1"/>
</dbReference>
<dbReference type="PROSITE" id="PS50893">
    <property type="entry name" value="ABC_TRANSPORTER_2"/>
    <property type="match status" value="1"/>
</dbReference>
<dbReference type="PROSITE" id="PS51238">
    <property type="entry name" value="PSTB"/>
    <property type="match status" value="1"/>
</dbReference>
<organism>
    <name type="scientific">Rhodopseudomonas palustris (strain BisB5)</name>
    <dbReference type="NCBI Taxonomy" id="316057"/>
    <lineage>
        <taxon>Bacteria</taxon>
        <taxon>Pseudomonadati</taxon>
        <taxon>Pseudomonadota</taxon>
        <taxon>Alphaproteobacteria</taxon>
        <taxon>Hyphomicrobiales</taxon>
        <taxon>Nitrobacteraceae</taxon>
        <taxon>Rhodopseudomonas</taxon>
    </lineage>
</organism>
<name>PSTB_RHOPS</name>
<protein>
    <recommendedName>
        <fullName evidence="1">Phosphate import ATP-binding protein PstB</fullName>
        <ecNumber evidence="1">7.3.2.1</ecNumber>
    </recommendedName>
    <alternativeName>
        <fullName evidence="1">ABC phosphate transporter</fullName>
    </alternativeName>
    <alternativeName>
        <fullName evidence="1">Phosphate-transporting ATPase</fullName>
    </alternativeName>
</protein>
<sequence length="274" mass="30342">MSEISIATSVPSGPGPLIGNQPDGPAKVIVRDLNFYYGQNHALKHINLSLAANRVTAFIGPSGCGKSTLLRVFNRMYDLYPGQRAEGQVMLDGNNILDPKLDLNLLRARVGMVFQKPTPFPMTIYENIAFGIRLYEKISKSEMDGRVEKALRSAALWNEVKDKLNASGLSLSGGQQQRLCIARTIAVRPEVILFDEPCSALDPISTAKIEELIDELKEDYTIAIVTHNMQQAARVSESTAFMYLGELIEFGPTNKIFTSPNDRRTQDYITGRFG</sequence>
<proteinExistence type="inferred from homology"/>
<keyword id="KW-0067">ATP-binding</keyword>
<keyword id="KW-0997">Cell inner membrane</keyword>
<keyword id="KW-1003">Cell membrane</keyword>
<keyword id="KW-0472">Membrane</keyword>
<keyword id="KW-0547">Nucleotide-binding</keyword>
<keyword id="KW-0592">Phosphate transport</keyword>
<keyword id="KW-1278">Translocase</keyword>
<keyword id="KW-0813">Transport</keyword>